<protein>
    <recommendedName>
        <fullName>Uncharacterized protein RT0683</fullName>
    </recommendedName>
</protein>
<dbReference type="EMBL" id="AE017197">
    <property type="protein sequence ID" value="AAU04143.1"/>
    <property type="molecule type" value="Genomic_DNA"/>
</dbReference>
<dbReference type="RefSeq" id="WP_011191120.1">
    <property type="nucleotide sequence ID" value="NC_006142.1"/>
</dbReference>
<dbReference type="SMR" id="Q68W49"/>
<dbReference type="KEGG" id="rty:RT0683"/>
<dbReference type="eggNOG" id="COG3475">
    <property type="taxonomic scope" value="Bacteria"/>
</dbReference>
<dbReference type="HOGENOM" id="CLU_091693_0_0_5"/>
<dbReference type="OrthoDB" id="9786100at2"/>
<dbReference type="Proteomes" id="UP000000604">
    <property type="component" value="Chromosome"/>
</dbReference>
<dbReference type="GO" id="GO:0016020">
    <property type="term" value="C:membrane"/>
    <property type="evidence" value="ECO:0007669"/>
    <property type="project" value="UniProtKB-SubCell"/>
</dbReference>
<dbReference type="GO" id="GO:0016740">
    <property type="term" value="F:transferase activity"/>
    <property type="evidence" value="ECO:0007669"/>
    <property type="project" value="UniProtKB-KW"/>
</dbReference>
<dbReference type="GO" id="GO:0009100">
    <property type="term" value="P:glycoprotein metabolic process"/>
    <property type="evidence" value="ECO:0007669"/>
    <property type="project" value="UniProtKB-ARBA"/>
</dbReference>
<dbReference type="InterPro" id="IPR007074">
    <property type="entry name" value="LicD/FKTN/FKRP_NTP_transf"/>
</dbReference>
<dbReference type="InterPro" id="IPR052942">
    <property type="entry name" value="LPS_cholinephosphotransferase"/>
</dbReference>
<dbReference type="InterPro" id="IPR005728">
    <property type="entry name" value="RPE1"/>
</dbReference>
<dbReference type="NCBIfam" id="TIGR01045">
    <property type="entry name" value="RPE1"/>
    <property type="match status" value="1"/>
</dbReference>
<dbReference type="PANTHER" id="PTHR43404">
    <property type="entry name" value="LIPOPOLYSACCHARIDE CHOLINEPHOSPHOTRANSFERASE LICD"/>
    <property type="match status" value="1"/>
</dbReference>
<dbReference type="PANTHER" id="PTHR43404:SF2">
    <property type="entry name" value="LIPOPOLYSACCHARIDE CHOLINEPHOSPHOTRANSFERASE LICD"/>
    <property type="match status" value="1"/>
</dbReference>
<dbReference type="Pfam" id="PF04991">
    <property type="entry name" value="LicD"/>
    <property type="match status" value="1"/>
</dbReference>
<accession>Q68W49</accession>
<keyword id="KW-0472">Membrane</keyword>
<keyword id="KW-0808">Transferase</keyword>
<keyword id="KW-0812">Transmembrane</keyword>
<keyword id="KW-1133">Transmembrane helix</keyword>
<feature type="chain" id="PRO_0000294123" description="Uncharacterized protein RT0683">
    <location>
        <begin position="1"/>
        <end position="309"/>
    </location>
</feature>
<feature type="transmembrane region" description="Helical" evidence="1">
    <location>
        <begin position="62"/>
        <end position="82"/>
    </location>
</feature>
<feature type="domain" description="RPE1 insert">
    <location>
        <begin position="9"/>
        <end position="55"/>
    </location>
</feature>
<sequence length="309" mass="36466">MIKLKSILNFLYNIANKDGFKGYKECRTSAYKNVFDDSSTKSTSKFHLGISDTKNLLSLQNIIGLILIIFAGVLFYAYILQHEWRYVTLSDAQVKRYRISEKKALSLYQLMKDTHELLTKNNIKYWIESGTLLGAVRHQGIIPFDDDLDIGIMHEDEIHFQQILPQFKQLGYRIKHNKIYVICGERCLDIFIFHKEKDKFVHILYDQYPNDFFYENELYPLKKYKFGNIEVYGPFDPIGNLNRQYPEWDKYAIIYSPHSFHLLFLSNIEKKTKFILTPELLKPAQPFGPLKDKVNIVNSANIYNDMDYH</sequence>
<reference key="1">
    <citation type="journal article" date="2004" name="J. Bacteriol.">
        <title>Complete genome sequence of Rickettsia typhi and comparison with sequences of other Rickettsiae.</title>
        <authorList>
            <person name="McLeod M.P."/>
            <person name="Qin X."/>
            <person name="Karpathy S.E."/>
            <person name="Gioia J."/>
            <person name="Highlander S.K."/>
            <person name="Fox G.E."/>
            <person name="McNeill T.Z."/>
            <person name="Jiang H."/>
            <person name="Muzny D."/>
            <person name="Jacob L.S."/>
            <person name="Hawes A.C."/>
            <person name="Sodergren E."/>
            <person name="Gill R."/>
            <person name="Hume J."/>
            <person name="Morgan M."/>
            <person name="Fan G."/>
            <person name="Amin A.G."/>
            <person name="Gibbs R.A."/>
            <person name="Hong C."/>
            <person name="Yu X.-J."/>
            <person name="Walker D.H."/>
            <person name="Weinstock G.M."/>
        </authorList>
    </citation>
    <scope>NUCLEOTIDE SEQUENCE [LARGE SCALE GENOMIC DNA]</scope>
    <source>
        <strain>ATCC VR-144 / Wilmington</strain>
    </source>
</reference>
<evidence type="ECO:0000255" key="1"/>
<evidence type="ECO:0000305" key="2"/>
<name>Y683_RICTY</name>
<gene>
    <name type="ordered locus">RT0683</name>
</gene>
<comment type="subcellular location">
    <subcellularLocation>
        <location evidence="2">Membrane</location>
        <topology evidence="2">Single-pass membrane protein</topology>
    </subcellularLocation>
</comment>
<comment type="similarity">
    <text evidence="2">Belongs to the LicD transferase family.</text>
</comment>
<organism>
    <name type="scientific">Rickettsia typhi (strain ATCC VR-144 / Wilmington)</name>
    <dbReference type="NCBI Taxonomy" id="257363"/>
    <lineage>
        <taxon>Bacteria</taxon>
        <taxon>Pseudomonadati</taxon>
        <taxon>Pseudomonadota</taxon>
        <taxon>Alphaproteobacteria</taxon>
        <taxon>Rickettsiales</taxon>
        <taxon>Rickettsiaceae</taxon>
        <taxon>Rickettsieae</taxon>
        <taxon>Rickettsia</taxon>
        <taxon>typhus group</taxon>
    </lineage>
</organism>
<proteinExistence type="inferred from homology"/>